<protein>
    <recommendedName>
        <fullName evidence="1">UPF0370 protein YpfN</fullName>
    </recommendedName>
</protein>
<feature type="chain" id="PRO_1000199720" description="UPF0370 protein YpfN">
    <location>
        <begin position="1"/>
        <end position="66"/>
    </location>
</feature>
<feature type="transmembrane region" description="Helical" evidence="1">
    <location>
        <begin position="4"/>
        <end position="24"/>
    </location>
</feature>
<feature type="region of interest" description="Disordered" evidence="2">
    <location>
        <begin position="39"/>
        <end position="66"/>
    </location>
</feature>
<feature type="compositionally biased region" description="Basic and acidic residues" evidence="2">
    <location>
        <begin position="42"/>
        <end position="51"/>
    </location>
</feature>
<name>YPFN_ECOSM</name>
<comment type="subcellular location">
    <subcellularLocation>
        <location evidence="1">Cell membrane</location>
        <topology evidence="1">Single-pass membrane protein</topology>
    </subcellularLocation>
</comment>
<comment type="similarity">
    <text evidence="1">Belongs to the UPF0370 family.</text>
</comment>
<reference key="1">
    <citation type="journal article" date="2008" name="J. Bacteriol.">
        <title>Insights into the environmental resistance gene pool from the genome sequence of the multidrug-resistant environmental isolate Escherichia coli SMS-3-5.</title>
        <authorList>
            <person name="Fricke W.F."/>
            <person name="Wright M.S."/>
            <person name="Lindell A.H."/>
            <person name="Harkins D.M."/>
            <person name="Baker-Austin C."/>
            <person name="Ravel J."/>
            <person name="Stepanauskas R."/>
        </authorList>
    </citation>
    <scope>NUCLEOTIDE SEQUENCE [LARGE SCALE GENOMIC DNA]</scope>
    <source>
        <strain>SMS-3-5 / SECEC</strain>
    </source>
</reference>
<proteinExistence type="inferred from homology"/>
<keyword id="KW-1003">Cell membrane</keyword>
<keyword id="KW-0472">Membrane</keyword>
<keyword id="KW-0812">Transmembrane</keyword>
<keyword id="KW-1133">Transmembrane helix</keyword>
<gene>
    <name evidence="1" type="primary">ypfN</name>
    <name type="ordered locus">EcSMS35_2619</name>
</gene>
<accession>B1LNC2</accession>
<organism>
    <name type="scientific">Escherichia coli (strain SMS-3-5 / SECEC)</name>
    <dbReference type="NCBI Taxonomy" id="439855"/>
    <lineage>
        <taxon>Bacteria</taxon>
        <taxon>Pseudomonadati</taxon>
        <taxon>Pseudomonadota</taxon>
        <taxon>Gammaproteobacteria</taxon>
        <taxon>Enterobacterales</taxon>
        <taxon>Enterobacteriaceae</taxon>
        <taxon>Escherichia</taxon>
    </lineage>
</organism>
<sequence length="66" mass="8071">MDWLAKYWWILVIVFLVGVLLNVIKDLKRVDHKKFLANKPELPPHRDFNDKWDDDDDWPKKDQPKK</sequence>
<dbReference type="EMBL" id="CP000970">
    <property type="protein sequence ID" value="ACB16170.1"/>
    <property type="molecule type" value="Genomic_DNA"/>
</dbReference>
<dbReference type="RefSeq" id="WP_000383836.1">
    <property type="nucleotide sequence ID" value="NC_010498.1"/>
</dbReference>
<dbReference type="SMR" id="B1LNC2"/>
<dbReference type="KEGG" id="ecm:EcSMS35_2619"/>
<dbReference type="HOGENOM" id="CLU_198936_0_0_6"/>
<dbReference type="Proteomes" id="UP000007011">
    <property type="component" value="Chromosome"/>
</dbReference>
<dbReference type="GO" id="GO:0005886">
    <property type="term" value="C:plasma membrane"/>
    <property type="evidence" value="ECO:0007669"/>
    <property type="project" value="UniProtKB-SubCell"/>
</dbReference>
<dbReference type="HAMAP" id="MF_01566">
    <property type="entry name" value="UPF0370"/>
    <property type="match status" value="1"/>
</dbReference>
<dbReference type="InterPro" id="IPR020910">
    <property type="entry name" value="UPF0370"/>
</dbReference>
<dbReference type="NCBIfam" id="NF010185">
    <property type="entry name" value="PRK13664.1"/>
    <property type="match status" value="1"/>
</dbReference>
<dbReference type="Pfam" id="PF13980">
    <property type="entry name" value="UPF0370"/>
    <property type="match status" value="1"/>
</dbReference>
<evidence type="ECO:0000255" key="1">
    <source>
        <dbReference type="HAMAP-Rule" id="MF_01566"/>
    </source>
</evidence>
<evidence type="ECO:0000256" key="2">
    <source>
        <dbReference type="SAM" id="MobiDB-lite"/>
    </source>
</evidence>